<feature type="chain" id="PRO_0000192840" description="Casein kinase I isoform gamma-1">
    <location>
        <begin position="1"/>
        <end position="459"/>
    </location>
</feature>
<feature type="domain" description="Protein kinase" evidence="3">
    <location>
        <begin position="44"/>
        <end position="315"/>
    </location>
</feature>
<feature type="region of interest" description="Disordered" evidence="5">
    <location>
        <begin position="1"/>
        <end position="34"/>
    </location>
</feature>
<feature type="region of interest" description="Disordered" evidence="5">
    <location>
        <begin position="351"/>
        <end position="388"/>
    </location>
</feature>
<feature type="compositionally biased region" description="Basic and acidic residues" evidence="5">
    <location>
        <begin position="1"/>
        <end position="13"/>
    </location>
</feature>
<feature type="compositionally biased region" description="Polar residues" evidence="5">
    <location>
        <begin position="15"/>
        <end position="34"/>
    </location>
</feature>
<feature type="compositionally biased region" description="Basic and acidic residues" evidence="5">
    <location>
        <begin position="351"/>
        <end position="360"/>
    </location>
</feature>
<feature type="compositionally biased region" description="Polar residues" evidence="5">
    <location>
        <begin position="361"/>
        <end position="372"/>
    </location>
</feature>
<feature type="active site" description="Proton acceptor" evidence="3 4">
    <location>
        <position position="164"/>
    </location>
</feature>
<feature type="binding site" evidence="3">
    <location>
        <begin position="50"/>
        <end position="58"/>
    </location>
    <ligand>
        <name>ATP</name>
        <dbReference type="ChEBI" id="CHEBI:30616"/>
    </ligand>
</feature>
<feature type="binding site" evidence="3">
    <location>
        <position position="73"/>
    </location>
    <ligand>
        <name>ATP</name>
        <dbReference type="ChEBI" id="CHEBI:30616"/>
    </ligand>
</feature>
<feature type="modified residue" description="Phosphoserine" evidence="2">
    <location>
        <position position="344"/>
    </location>
</feature>
<feature type="sequence conflict" description="In Ref. 1; BAC41152." evidence="7" ref="1">
    <original>L</original>
    <variation>H</variation>
    <location>
        <position position="38"/>
    </location>
</feature>
<proteinExistence type="evidence at protein level"/>
<comment type="function">
    <text evidence="1 6">Serine/threonine-protein kinase. Casein kinases are operationally defined by their preferential utilization of acidic proteins such as caseins as substrates. It can phosphorylate a large number of proteins. Participates in Wnt signaling. Phosphorylates CLSPN (By similarity). Regulates fast synaptic transmission mediated by glutamate.</text>
</comment>
<comment type="catalytic activity">
    <reaction>
        <text>L-seryl-[protein] + ATP = O-phospho-L-seryl-[protein] + ADP + H(+)</text>
        <dbReference type="Rhea" id="RHEA:17989"/>
        <dbReference type="Rhea" id="RHEA-COMP:9863"/>
        <dbReference type="Rhea" id="RHEA-COMP:11604"/>
        <dbReference type="ChEBI" id="CHEBI:15378"/>
        <dbReference type="ChEBI" id="CHEBI:29999"/>
        <dbReference type="ChEBI" id="CHEBI:30616"/>
        <dbReference type="ChEBI" id="CHEBI:83421"/>
        <dbReference type="ChEBI" id="CHEBI:456216"/>
        <dbReference type="EC" id="2.7.11.1"/>
    </reaction>
</comment>
<comment type="catalytic activity">
    <reaction>
        <text>L-threonyl-[protein] + ATP = O-phospho-L-threonyl-[protein] + ADP + H(+)</text>
        <dbReference type="Rhea" id="RHEA:46608"/>
        <dbReference type="Rhea" id="RHEA-COMP:11060"/>
        <dbReference type="Rhea" id="RHEA-COMP:11605"/>
        <dbReference type="ChEBI" id="CHEBI:15378"/>
        <dbReference type="ChEBI" id="CHEBI:30013"/>
        <dbReference type="ChEBI" id="CHEBI:30616"/>
        <dbReference type="ChEBI" id="CHEBI:61977"/>
        <dbReference type="ChEBI" id="CHEBI:456216"/>
        <dbReference type="EC" id="2.7.11.1"/>
    </reaction>
</comment>
<comment type="subunit">
    <text evidence="1">Monomer.</text>
</comment>
<comment type="subcellular location">
    <subcellularLocation>
        <location evidence="1">Cytoplasm</location>
    </subcellularLocation>
</comment>
<comment type="tissue specificity">
    <text evidence="6">Expressed in both the striatum and the neocortex.</text>
</comment>
<comment type="PTM">
    <text evidence="1">Autophosphorylated.</text>
</comment>
<comment type="similarity">
    <text evidence="7">Belongs to the protein kinase superfamily. CK1 Ser/Thr protein kinase family. Casein kinase I subfamily.</text>
</comment>
<protein>
    <recommendedName>
        <fullName>Casein kinase I isoform gamma-1</fullName>
        <shortName>CKI-gamma 1</shortName>
        <ecNumber>2.7.11.1</ecNumber>
    </recommendedName>
</protein>
<gene>
    <name type="primary">Csnk1g1</name>
</gene>
<reference key="1">
    <citation type="journal article" date="2005" name="Science">
        <title>The transcriptional landscape of the mammalian genome.</title>
        <authorList>
            <person name="Carninci P."/>
            <person name="Kasukawa T."/>
            <person name="Katayama S."/>
            <person name="Gough J."/>
            <person name="Frith M.C."/>
            <person name="Maeda N."/>
            <person name="Oyama R."/>
            <person name="Ravasi T."/>
            <person name="Lenhard B."/>
            <person name="Wells C."/>
            <person name="Kodzius R."/>
            <person name="Shimokawa K."/>
            <person name="Bajic V.B."/>
            <person name="Brenner S.E."/>
            <person name="Batalov S."/>
            <person name="Forrest A.R."/>
            <person name="Zavolan M."/>
            <person name="Davis M.J."/>
            <person name="Wilming L.G."/>
            <person name="Aidinis V."/>
            <person name="Allen J.E."/>
            <person name="Ambesi-Impiombato A."/>
            <person name="Apweiler R."/>
            <person name="Aturaliya R.N."/>
            <person name="Bailey T.L."/>
            <person name="Bansal M."/>
            <person name="Baxter L."/>
            <person name="Beisel K.W."/>
            <person name="Bersano T."/>
            <person name="Bono H."/>
            <person name="Chalk A.M."/>
            <person name="Chiu K.P."/>
            <person name="Choudhary V."/>
            <person name="Christoffels A."/>
            <person name="Clutterbuck D.R."/>
            <person name="Crowe M.L."/>
            <person name="Dalla E."/>
            <person name="Dalrymple B.P."/>
            <person name="de Bono B."/>
            <person name="Della Gatta G."/>
            <person name="di Bernardo D."/>
            <person name="Down T."/>
            <person name="Engstrom P."/>
            <person name="Fagiolini M."/>
            <person name="Faulkner G."/>
            <person name="Fletcher C.F."/>
            <person name="Fukushima T."/>
            <person name="Furuno M."/>
            <person name="Futaki S."/>
            <person name="Gariboldi M."/>
            <person name="Georgii-Hemming P."/>
            <person name="Gingeras T.R."/>
            <person name="Gojobori T."/>
            <person name="Green R.E."/>
            <person name="Gustincich S."/>
            <person name="Harbers M."/>
            <person name="Hayashi Y."/>
            <person name="Hensch T.K."/>
            <person name="Hirokawa N."/>
            <person name="Hill D."/>
            <person name="Huminiecki L."/>
            <person name="Iacono M."/>
            <person name="Ikeo K."/>
            <person name="Iwama A."/>
            <person name="Ishikawa T."/>
            <person name="Jakt M."/>
            <person name="Kanapin A."/>
            <person name="Katoh M."/>
            <person name="Kawasawa Y."/>
            <person name="Kelso J."/>
            <person name="Kitamura H."/>
            <person name="Kitano H."/>
            <person name="Kollias G."/>
            <person name="Krishnan S.P."/>
            <person name="Kruger A."/>
            <person name="Kummerfeld S.K."/>
            <person name="Kurochkin I.V."/>
            <person name="Lareau L.F."/>
            <person name="Lazarevic D."/>
            <person name="Lipovich L."/>
            <person name="Liu J."/>
            <person name="Liuni S."/>
            <person name="McWilliam S."/>
            <person name="Madan Babu M."/>
            <person name="Madera M."/>
            <person name="Marchionni L."/>
            <person name="Matsuda H."/>
            <person name="Matsuzawa S."/>
            <person name="Miki H."/>
            <person name="Mignone F."/>
            <person name="Miyake S."/>
            <person name="Morris K."/>
            <person name="Mottagui-Tabar S."/>
            <person name="Mulder N."/>
            <person name="Nakano N."/>
            <person name="Nakauchi H."/>
            <person name="Ng P."/>
            <person name="Nilsson R."/>
            <person name="Nishiguchi S."/>
            <person name="Nishikawa S."/>
            <person name="Nori F."/>
            <person name="Ohara O."/>
            <person name="Okazaki Y."/>
            <person name="Orlando V."/>
            <person name="Pang K.C."/>
            <person name="Pavan W.J."/>
            <person name="Pavesi G."/>
            <person name="Pesole G."/>
            <person name="Petrovsky N."/>
            <person name="Piazza S."/>
            <person name="Reed J."/>
            <person name="Reid J.F."/>
            <person name="Ring B.Z."/>
            <person name="Ringwald M."/>
            <person name="Rost B."/>
            <person name="Ruan Y."/>
            <person name="Salzberg S.L."/>
            <person name="Sandelin A."/>
            <person name="Schneider C."/>
            <person name="Schoenbach C."/>
            <person name="Sekiguchi K."/>
            <person name="Semple C.A."/>
            <person name="Seno S."/>
            <person name="Sessa L."/>
            <person name="Sheng Y."/>
            <person name="Shibata Y."/>
            <person name="Shimada H."/>
            <person name="Shimada K."/>
            <person name="Silva D."/>
            <person name="Sinclair B."/>
            <person name="Sperling S."/>
            <person name="Stupka E."/>
            <person name="Sugiura K."/>
            <person name="Sultana R."/>
            <person name="Takenaka Y."/>
            <person name="Taki K."/>
            <person name="Tammoja K."/>
            <person name="Tan S.L."/>
            <person name="Tang S."/>
            <person name="Taylor M.S."/>
            <person name="Tegner J."/>
            <person name="Teichmann S.A."/>
            <person name="Ueda H.R."/>
            <person name="van Nimwegen E."/>
            <person name="Verardo R."/>
            <person name="Wei C.L."/>
            <person name="Yagi K."/>
            <person name="Yamanishi H."/>
            <person name="Zabarovsky E."/>
            <person name="Zhu S."/>
            <person name="Zimmer A."/>
            <person name="Hide W."/>
            <person name="Bult C."/>
            <person name="Grimmond S.M."/>
            <person name="Teasdale R.D."/>
            <person name="Liu E.T."/>
            <person name="Brusic V."/>
            <person name="Quackenbush J."/>
            <person name="Wahlestedt C."/>
            <person name="Mattick J.S."/>
            <person name="Hume D.A."/>
            <person name="Kai C."/>
            <person name="Sasaki D."/>
            <person name="Tomaru Y."/>
            <person name="Fukuda S."/>
            <person name="Kanamori-Katayama M."/>
            <person name="Suzuki M."/>
            <person name="Aoki J."/>
            <person name="Arakawa T."/>
            <person name="Iida J."/>
            <person name="Imamura K."/>
            <person name="Itoh M."/>
            <person name="Kato T."/>
            <person name="Kawaji H."/>
            <person name="Kawagashira N."/>
            <person name="Kawashima T."/>
            <person name="Kojima M."/>
            <person name="Kondo S."/>
            <person name="Konno H."/>
            <person name="Nakano K."/>
            <person name="Ninomiya N."/>
            <person name="Nishio T."/>
            <person name="Okada M."/>
            <person name="Plessy C."/>
            <person name="Shibata K."/>
            <person name="Shiraki T."/>
            <person name="Suzuki S."/>
            <person name="Tagami M."/>
            <person name="Waki K."/>
            <person name="Watahiki A."/>
            <person name="Okamura-Oho Y."/>
            <person name="Suzuki H."/>
            <person name="Kawai J."/>
            <person name="Hayashizaki Y."/>
        </authorList>
    </citation>
    <scope>NUCLEOTIDE SEQUENCE [LARGE SCALE MRNA]</scope>
    <source>
        <strain>C57BL/6J</strain>
        <tissue>Lung</tissue>
    </source>
</reference>
<reference key="2">
    <citation type="journal article" date="2005" name="J. Neurosci.">
        <title>Physiological role for casein kinase 1 in glutamatergic synaptic transmission.</title>
        <authorList>
            <person name="Chergui K."/>
            <person name="Svenningsson P."/>
            <person name="Greengard P."/>
        </authorList>
    </citation>
    <scope>FUNCTION IN SYNAPTIC TRANSMISSION</scope>
    <scope>TISSUE SPECIFICITY</scope>
</reference>
<reference key="3">
    <citation type="journal article" date="2009" name="PLoS Biol.">
        <title>Lineage-specific biology revealed by a finished genome assembly of the mouse.</title>
        <authorList>
            <person name="Church D.M."/>
            <person name="Goodstadt L."/>
            <person name="Hillier L.W."/>
            <person name="Zody M.C."/>
            <person name="Goldstein S."/>
            <person name="She X."/>
            <person name="Bult C.J."/>
            <person name="Agarwala R."/>
            <person name="Cherry J.L."/>
            <person name="DiCuccio M."/>
            <person name="Hlavina W."/>
            <person name="Kapustin Y."/>
            <person name="Meric P."/>
            <person name="Maglott D."/>
            <person name="Birtle Z."/>
            <person name="Marques A.C."/>
            <person name="Graves T."/>
            <person name="Zhou S."/>
            <person name="Teague B."/>
            <person name="Potamousis K."/>
            <person name="Churas C."/>
            <person name="Place M."/>
            <person name="Herschleb J."/>
            <person name="Runnheim R."/>
            <person name="Forrest D."/>
            <person name="Amos-Landgraf J."/>
            <person name="Schwartz D.C."/>
            <person name="Cheng Z."/>
            <person name="Lindblad-Toh K."/>
            <person name="Eichler E.E."/>
            <person name="Ponting C.P."/>
        </authorList>
    </citation>
    <scope>NUCLEOTIDE SEQUENCE [LARGE SCALE GENOMIC DNA]</scope>
    <source>
        <strain>C57BL/6J</strain>
    </source>
</reference>
<evidence type="ECO:0000250" key="1"/>
<evidence type="ECO:0000250" key="2">
    <source>
        <dbReference type="UniProtKB" id="Q9HCP0"/>
    </source>
</evidence>
<evidence type="ECO:0000255" key="3">
    <source>
        <dbReference type="PROSITE-ProRule" id="PRU00159"/>
    </source>
</evidence>
<evidence type="ECO:0000255" key="4">
    <source>
        <dbReference type="PROSITE-ProRule" id="PRU10027"/>
    </source>
</evidence>
<evidence type="ECO:0000256" key="5">
    <source>
        <dbReference type="SAM" id="MobiDB-lite"/>
    </source>
</evidence>
<evidence type="ECO:0000269" key="6">
    <source>
    </source>
</evidence>
<evidence type="ECO:0000305" key="7"/>
<sequence>MDHSNREKDDRQRTTKTMAQRNTHCSRPSGTSTSSGVLMVGPNFRVGKKIGCGNFGELRLGKNLYTNEYVAIKLEPIKSRAPQLHLEYRFYKQLGSAGEGLPQVYYFGPCGKYNAMVLELLGPSLEDLFDLCDRTFTLKTVLMIAIQLLSRMEYVHSKNLIYRDVKPENFLIGRQGNKKEHVIHIIDFGLAKEYVDPETKKHIPYREHKSLTGTARYMSINTHLGKEQSRRDDLEALGHMFMYFLRGSLPWQGLKADTLKERYQKIGDTKRNTPIEALCENFPEEMATYLRYVRRLDFFEKPDYEYLRTLFTDLFERKGYTFDYAYDWVGRPIPTPVGSVHVDSGASAITRESHTHRDRPSQQQPLRNQTTSSERRGEWEIQPSRQTNTSYLTSHLAADRHGGSVQVVSSTNGELNVDDPTGAHSNAPITAHAEVEVVEEAKCCCFFKRKRKKTAQRHK</sequence>
<accession>Q8BTH8</accession>
<accession>E9QPK6</accession>
<dbReference type="EC" id="2.7.11.1"/>
<dbReference type="EMBL" id="AK090262">
    <property type="protein sequence ID" value="BAC41152.1"/>
    <property type="molecule type" value="mRNA"/>
</dbReference>
<dbReference type="EMBL" id="AC112676">
    <property type="status" value="NOT_ANNOTATED_CDS"/>
    <property type="molecule type" value="Genomic_DNA"/>
</dbReference>
<dbReference type="EMBL" id="AC151906">
    <property type="status" value="NOT_ANNOTATED_CDS"/>
    <property type="molecule type" value="Genomic_DNA"/>
</dbReference>
<dbReference type="CCDS" id="CCDS23300.1"/>
<dbReference type="RefSeq" id="NP_775277.2">
    <property type="nucleotide sequence ID" value="NM_173185.3"/>
</dbReference>
<dbReference type="RefSeq" id="XP_011241010.1">
    <property type="nucleotide sequence ID" value="XM_011242708.3"/>
</dbReference>
<dbReference type="RefSeq" id="XP_030100087.1">
    <property type="nucleotide sequence ID" value="XM_030244227.2"/>
</dbReference>
<dbReference type="SMR" id="Q8BTH8"/>
<dbReference type="BioGRID" id="229571">
    <property type="interactions" value="2"/>
</dbReference>
<dbReference type="FunCoup" id="Q8BTH8">
    <property type="interactions" value="5017"/>
</dbReference>
<dbReference type="IntAct" id="Q8BTH8">
    <property type="interactions" value="1"/>
</dbReference>
<dbReference type="STRING" id="10090.ENSMUSP00000034949"/>
<dbReference type="GlyGen" id="Q8BTH8">
    <property type="glycosylation" value="1 site, 1 N-linked glycan (1 site)"/>
</dbReference>
<dbReference type="iPTMnet" id="Q8BTH8"/>
<dbReference type="PhosphoSitePlus" id="Q8BTH8"/>
<dbReference type="SwissPalm" id="Q8BTH8"/>
<dbReference type="PaxDb" id="10090-ENSMUSP00000034949"/>
<dbReference type="PeptideAtlas" id="Q8BTH8"/>
<dbReference type="ProteomicsDB" id="263484"/>
<dbReference type="Pumba" id="Q8BTH8"/>
<dbReference type="Antibodypedia" id="13388">
    <property type="antibodies" value="441 antibodies from 32 providers"/>
</dbReference>
<dbReference type="DNASU" id="214897"/>
<dbReference type="Ensembl" id="ENSMUST00000034949.10">
    <property type="protein sequence ID" value="ENSMUSP00000034949.4"/>
    <property type="gene ID" value="ENSMUSG00000032384.17"/>
</dbReference>
<dbReference type="Ensembl" id="ENSMUST00000206594.2">
    <property type="protein sequence ID" value="ENSMUSP00000145947.2"/>
    <property type="gene ID" value="ENSMUSG00000032384.17"/>
</dbReference>
<dbReference type="GeneID" id="214897"/>
<dbReference type="KEGG" id="mmu:214897"/>
<dbReference type="UCSC" id="uc009qeg.1">
    <property type="organism name" value="mouse"/>
</dbReference>
<dbReference type="AGR" id="MGI:2660884"/>
<dbReference type="CTD" id="53944"/>
<dbReference type="MGI" id="MGI:2660884">
    <property type="gene designation" value="Csnk1g1"/>
</dbReference>
<dbReference type="VEuPathDB" id="HostDB:ENSMUSG00000032384"/>
<dbReference type="eggNOG" id="KOG1165">
    <property type="taxonomic scope" value="Eukaryota"/>
</dbReference>
<dbReference type="GeneTree" id="ENSGT00940000155628"/>
<dbReference type="InParanoid" id="Q8BTH8"/>
<dbReference type="OMA" id="GRGWDYK"/>
<dbReference type="OrthoDB" id="6498159at2759"/>
<dbReference type="PhylomeDB" id="Q8BTH8"/>
<dbReference type="TreeFam" id="TF313349"/>
<dbReference type="BioGRID-ORCS" id="214897">
    <property type="hits" value="4 hits in 80 CRISPR screens"/>
</dbReference>
<dbReference type="ChiTaRS" id="Csnk1g1">
    <property type="organism name" value="mouse"/>
</dbReference>
<dbReference type="PRO" id="PR:Q8BTH8"/>
<dbReference type="Proteomes" id="UP000000589">
    <property type="component" value="Chromosome 9"/>
</dbReference>
<dbReference type="RNAct" id="Q8BTH8">
    <property type="molecule type" value="protein"/>
</dbReference>
<dbReference type="Bgee" id="ENSMUSG00000032384">
    <property type="expression patterns" value="Expressed in bone fossa and 228 other cell types or tissues"/>
</dbReference>
<dbReference type="ExpressionAtlas" id="Q8BTH8">
    <property type="expression patterns" value="baseline and differential"/>
</dbReference>
<dbReference type="GO" id="GO:0005829">
    <property type="term" value="C:cytosol"/>
    <property type="evidence" value="ECO:0007669"/>
    <property type="project" value="Ensembl"/>
</dbReference>
<dbReference type="GO" id="GO:0005524">
    <property type="term" value="F:ATP binding"/>
    <property type="evidence" value="ECO:0007669"/>
    <property type="project" value="UniProtKB-KW"/>
</dbReference>
<dbReference type="GO" id="GO:0106310">
    <property type="term" value="F:protein serine kinase activity"/>
    <property type="evidence" value="ECO:0007669"/>
    <property type="project" value="RHEA"/>
</dbReference>
<dbReference type="GO" id="GO:0004674">
    <property type="term" value="F:protein serine/threonine kinase activity"/>
    <property type="evidence" value="ECO:0007669"/>
    <property type="project" value="UniProtKB-KW"/>
</dbReference>
<dbReference type="GO" id="GO:0016055">
    <property type="term" value="P:Wnt signaling pathway"/>
    <property type="evidence" value="ECO:0007669"/>
    <property type="project" value="UniProtKB-KW"/>
</dbReference>
<dbReference type="CDD" id="cd14126">
    <property type="entry name" value="STKc_CK1_gamma"/>
    <property type="match status" value="1"/>
</dbReference>
<dbReference type="FunFam" id="1.10.510.10:FF:001113">
    <property type="entry name" value="Casein kinase 1 gamma 2"/>
    <property type="match status" value="1"/>
</dbReference>
<dbReference type="FunFam" id="3.30.200.20:FF:000018">
    <property type="entry name" value="Casein kinase I isoform gamma-1"/>
    <property type="match status" value="1"/>
</dbReference>
<dbReference type="Gene3D" id="3.30.200.20">
    <property type="entry name" value="Phosphorylase Kinase, domain 1"/>
    <property type="match status" value="1"/>
</dbReference>
<dbReference type="Gene3D" id="1.10.510.10">
    <property type="entry name" value="Transferase(Phosphotransferase) domain 1"/>
    <property type="match status" value="1"/>
</dbReference>
<dbReference type="InterPro" id="IPR022247">
    <property type="entry name" value="Casein_kinase-1_gamma_C"/>
</dbReference>
<dbReference type="InterPro" id="IPR050235">
    <property type="entry name" value="CK1_Ser-Thr_kinase"/>
</dbReference>
<dbReference type="InterPro" id="IPR011009">
    <property type="entry name" value="Kinase-like_dom_sf"/>
</dbReference>
<dbReference type="InterPro" id="IPR000719">
    <property type="entry name" value="Prot_kinase_dom"/>
</dbReference>
<dbReference type="InterPro" id="IPR017441">
    <property type="entry name" value="Protein_kinase_ATP_BS"/>
</dbReference>
<dbReference type="InterPro" id="IPR008271">
    <property type="entry name" value="Ser/Thr_kinase_AS"/>
</dbReference>
<dbReference type="PANTHER" id="PTHR11909">
    <property type="entry name" value="CASEIN KINASE-RELATED"/>
    <property type="match status" value="1"/>
</dbReference>
<dbReference type="Pfam" id="PF12605">
    <property type="entry name" value="CK1gamma_C"/>
    <property type="match status" value="1"/>
</dbReference>
<dbReference type="Pfam" id="PF00069">
    <property type="entry name" value="Pkinase"/>
    <property type="match status" value="1"/>
</dbReference>
<dbReference type="SMART" id="SM00220">
    <property type="entry name" value="S_TKc"/>
    <property type="match status" value="1"/>
</dbReference>
<dbReference type="SUPFAM" id="SSF56112">
    <property type="entry name" value="Protein kinase-like (PK-like)"/>
    <property type="match status" value="1"/>
</dbReference>
<dbReference type="PROSITE" id="PS00107">
    <property type="entry name" value="PROTEIN_KINASE_ATP"/>
    <property type="match status" value="1"/>
</dbReference>
<dbReference type="PROSITE" id="PS50011">
    <property type="entry name" value="PROTEIN_KINASE_DOM"/>
    <property type="match status" value="1"/>
</dbReference>
<dbReference type="PROSITE" id="PS00108">
    <property type="entry name" value="PROTEIN_KINASE_ST"/>
    <property type="match status" value="1"/>
</dbReference>
<organism>
    <name type="scientific">Mus musculus</name>
    <name type="common">Mouse</name>
    <dbReference type="NCBI Taxonomy" id="10090"/>
    <lineage>
        <taxon>Eukaryota</taxon>
        <taxon>Metazoa</taxon>
        <taxon>Chordata</taxon>
        <taxon>Craniata</taxon>
        <taxon>Vertebrata</taxon>
        <taxon>Euteleostomi</taxon>
        <taxon>Mammalia</taxon>
        <taxon>Eutheria</taxon>
        <taxon>Euarchontoglires</taxon>
        <taxon>Glires</taxon>
        <taxon>Rodentia</taxon>
        <taxon>Myomorpha</taxon>
        <taxon>Muroidea</taxon>
        <taxon>Muridae</taxon>
        <taxon>Murinae</taxon>
        <taxon>Mus</taxon>
        <taxon>Mus</taxon>
    </lineage>
</organism>
<keyword id="KW-0067">ATP-binding</keyword>
<keyword id="KW-0963">Cytoplasm</keyword>
<keyword id="KW-0418">Kinase</keyword>
<keyword id="KW-0547">Nucleotide-binding</keyword>
<keyword id="KW-0597">Phosphoprotein</keyword>
<keyword id="KW-1185">Reference proteome</keyword>
<keyword id="KW-0723">Serine/threonine-protein kinase</keyword>
<keyword id="KW-0808">Transferase</keyword>
<keyword id="KW-0879">Wnt signaling pathway</keyword>
<name>KC1G1_MOUSE</name>